<proteinExistence type="inferred from homology"/>
<organism>
    <name type="scientific">Eremothecium gossypii (strain ATCC 10895 / CBS 109.51 / FGSC 9923 / NRRL Y-1056)</name>
    <name type="common">Yeast</name>
    <name type="synonym">Ashbya gossypii</name>
    <dbReference type="NCBI Taxonomy" id="284811"/>
    <lineage>
        <taxon>Eukaryota</taxon>
        <taxon>Fungi</taxon>
        <taxon>Dikarya</taxon>
        <taxon>Ascomycota</taxon>
        <taxon>Saccharomycotina</taxon>
        <taxon>Saccharomycetes</taxon>
        <taxon>Saccharomycetales</taxon>
        <taxon>Saccharomycetaceae</taxon>
        <taxon>Eremothecium</taxon>
    </lineage>
</organism>
<name>CWC21_EREGS</name>
<accession>Q751G9</accession>
<protein>
    <recommendedName>
        <fullName>Pre-mRNA-splicing factor CWC21</fullName>
    </recommendedName>
</protein>
<sequence length="125" mass="13887">MSYNGIGLKTAKGSSTSGHIQRSLADNQAGNVKNFSSRKEESQGRVARASRERKLDGSMAAHADRREIEVRVSELRDELEDADIDAEEIERRCEQLRRQLQSEAAERARVAQAYTPRNARSAGAT</sequence>
<feature type="chain" id="PRO_0000123493" description="Pre-mRNA-splicing factor CWC21">
    <location>
        <begin position="1"/>
        <end position="125"/>
    </location>
</feature>
<feature type="domain" description="CWF21" evidence="2">
    <location>
        <begin position="62"/>
        <end position="103"/>
    </location>
</feature>
<feature type="region of interest" description="Disordered" evidence="3">
    <location>
        <begin position="1"/>
        <end position="60"/>
    </location>
</feature>
<feature type="coiled-coil region" evidence="2">
    <location>
        <begin position="59"/>
        <end position="114"/>
    </location>
</feature>
<feature type="compositionally biased region" description="Polar residues" evidence="3">
    <location>
        <begin position="12"/>
        <end position="35"/>
    </location>
</feature>
<feature type="compositionally biased region" description="Basic and acidic residues" evidence="3">
    <location>
        <begin position="37"/>
        <end position="60"/>
    </location>
</feature>
<keyword id="KW-0175">Coiled coil</keyword>
<keyword id="KW-0963">Cytoplasm</keyword>
<keyword id="KW-0507">mRNA processing</keyword>
<keyword id="KW-0508">mRNA splicing</keyword>
<keyword id="KW-0539">Nucleus</keyword>
<keyword id="KW-1185">Reference proteome</keyword>
<keyword id="KW-0747">Spliceosome</keyword>
<comment type="function">
    <text evidence="1">Involved in pre-mRNA splicing. May function at or prior to the first catalytic step of splicing at the catalytic center of the spliceosome. May do so by stabilizing the catalytic center or the position of the RNA substrate (By similarity).</text>
</comment>
<comment type="subunit">
    <text evidence="1">Associates with the NTC complex (or PRP19-associated complex). The NTC complex associates with the spliceosome after the release of the U1 and U4 snRNAs and forms the CWC spliceosome subcomplex reminiscent of a late-stage spliceosome.</text>
</comment>
<comment type="subcellular location">
    <subcellularLocation>
        <location evidence="1">Cytoplasm</location>
    </subcellularLocation>
    <subcellularLocation>
        <location evidence="1">Nucleus</location>
    </subcellularLocation>
</comment>
<comment type="similarity">
    <text evidence="4">Belongs to the CWC21 family.</text>
</comment>
<dbReference type="EMBL" id="AE016820">
    <property type="protein sequence ID" value="AAS54228.1"/>
    <property type="molecule type" value="Genomic_DNA"/>
</dbReference>
<dbReference type="RefSeq" id="NP_986404.1">
    <property type="nucleotide sequence ID" value="NM_211466.1"/>
</dbReference>
<dbReference type="SMR" id="Q751G9"/>
<dbReference type="FunCoup" id="Q751G9">
    <property type="interactions" value="69"/>
</dbReference>
<dbReference type="STRING" id="284811.Q751G9"/>
<dbReference type="EnsemblFungi" id="AAS54228">
    <property type="protein sequence ID" value="AAS54228"/>
    <property type="gene ID" value="AGOS_AGL263W"/>
</dbReference>
<dbReference type="GeneID" id="4622697"/>
<dbReference type="KEGG" id="ago:AGOS_AGL263W"/>
<dbReference type="eggNOG" id="KOG1869">
    <property type="taxonomic scope" value="Eukaryota"/>
</dbReference>
<dbReference type="HOGENOM" id="CLU_067891_3_1_1"/>
<dbReference type="InParanoid" id="Q751G9"/>
<dbReference type="OMA" id="RIEVKCM"/>
<dbReference type="OrthoDB" id="10267305at2759"/>
<dbReference type="Proteomes" id="UP000000591">
    <property type="component" value="Chromosome VII"/>
</dbReference>
<dbReference type="GO" id="GO:0005737">
    <property type="term" value="C:cytoplasm"/>
    <property type="evidence" value="ECO:0007669"/>
    <property type="project" value="UniProtKB-SubCell"/>
</dbReference>
<dbReference type="GO" id="GO:0000974">
    <property type="term" value="C:Prp19 complex"/>
    <property type="evidence" value="ECO:0007669"/>
    <property type="project" value="EnsemblFungi"/>
</dbReference>
<dbReference type="GO" id="GO:0005684">
    <property type="term" value="C:U2-type spliceosomal complex"/>
    <property type="evidence" value="ECO:0007669"/>
    <property type="project" value="EnsemblFungi"/>
</dbReference>
<dbReference type="GO" id="GO:0000398">
    <property type="term" value="P:mRNA splicing, via spliceosome"/>
    <property type="evidence" value="ECO:0007669"/>
    <property type="project" value="EnsemblFungi"/>
</dbReference>
<dbReference type="CDD" id="cd21372">
    <property type="entry name" value="cwf21_CWC21-like"/>
    <property type="match status" value="1"/>
</dbReference>
<dbReference type="Gene3D" id="6.10.140.420">
    <property type="match status" value="1"/>
</dbReference>
<dbReference type="InterPro" id="IPR051372">
    <property type="entry name" value="CWC21"/>
</dbReference>
<dbReference type="InterPro" id="IPR013170">
    <property type="entry name" value="mRNA_splic_Cwf21_dom"/>
</dbReference>
<dbReference type="PANTHER" id="PTHR36562">
    <property type="entry name" value="SERINE/ARGININE REPETITIVE MATRIX 2"/>
    <property type="match status" value="1"/>
</dbReference>
<dbReference type="PANTHER" id="PTHR36562:SF5">
    <property type="entry name" value="SERINE_ARGININE REPETITIVE MATRIX 2"/>
    <property type="match status" value="1"/>
</dbReference>
<dbReference type="Pfam" id="PF08312">
    <property type="entry name" value="cwf21"/>
    <property type="match status" value="1"/>
</dbReference>
<dbReference type="SMART" id="SM01115">
    <property type="entry name" value="cwf21"/>
    <property type="match status" value="1"/>
</dbReference>
<evidence type="ECO:0000250" key="1"/>
<evidence type="ECO:0000255" key="2"/>
<evidence type="ECO:0000256" key="3">
    <source>
        <dbReference type="SAM" id="MobiDB-lite"/>
    </source>
</evidence>
<evidence type="ECO:0000305" key="4"/>
<reference key="1">
    <citation type="journal article" date="2004" name="Science">
        <title>The Ashbya gossypii genome as a tool for mapping the ancient Saccharomyces cerevisiae genome.</title>
        <authorList>
            <person name="Dietrich F.S."/>
            <person name="Voegeli S."/>
            <person name="Brachat S."/>
            <person name="Lerch A."/>
            <person name="Gates K."/>
            <person name="Steiner S."/>
            <person name="Mohr C."/>
            <person name="Poehlmann R."/>
            <person name="Luedi P."/>
            <person name="Choi S."/>
            <person name="Wing R.A."/>
            <person name="Flavier A."/>
            <person name="Gaffney T.D."/>
            <person name="Philippsen P."/>
        </authorList>
    </citation>
    <scope>NUCLEOTIDE SEQUENCE [LARGE SCALE GENOMIC DNA]</scope>
    <source>
        <strain>ATCC 10895 / CBS 109.51 / FGSC 9923 / NRRL Y-1056</strain>
    </source>
</reference>
<reference key="2">
    <citation type="journal article" date="2013" name="G3 (Bethesda)">
        <title>Genomes of Ashbya fungi isolated from insects reveal four mating-type loci, numerous translocations, lack of transposons, and distinct gene duplications.</title>
        <authorList>
            <person name="Dietrich F.S."/>
            <person name="Voegeli S."/>
            <person name="Kuo S."/>
            <person name="Philippsen P."/>
        </authorList>
    </citation>
    <scope>GENOME REANNOTATION</scope>
    <source>
        <strain>ATCC 10895 / CBS 109.51 / FGSC 9923 / NRRL Y-1056</strain>
    </source>
</reference>
<gene>
    <name type="primary">CWC21</name>
    <name type="ordered locus">AGL263W</name>
</gene>